<comment type="function">
    <text evidence="2 6">Pattern recognition receptor (PRR) which binds Gram-positive and Gram-negative bacteria (PubMed:10224290). Also plays a role in binding of unopsonized particles by alveolar macrophages (PubMed:10224290). Binds to the secretoglobin SCGB3A2 (By similarity).</text>
</comment>
<comment type="subunit">
    <text evidence="1">Homotrimer; disulfide-linked. Trimers may assemble in larger oligomers thus resulting in the creation of a large surface capable of interacting with very large ligands.</text>
</comment>
<comment type="subcellular location">
    <subcellularLocation>
        <location evidence="6">Cell membrane</location>
        <topology evidence="7">Single-pass type II membrane protein</topology>
    </subcellularLocation>
</comment>
<comment type="tissue specificity">
    <text evidence="6">Expressed in alveolar macrophages, macrophages of lymph node sinues, and Kupffer cells in liver (at protein level).</text>
</comment>
<comment type="PTM">
    <text evidence="1">N-glycosylated.</text>
</comment>
<evidence type="ECO:0000250" key="1">
    <source>
        <dbReference type="UniProtKB" id="Q60754"/>
    </source>
</evidence>
<evidence type="ECO:0000250" key="2">
    <source>
        <dbReference type="UniProtKB" id="Q9UEW3"/>
    </source>
</evidence>
<evidence type="ECO:0000255" key="3"/>
<evidence type="ECO:0000255" key="4">
    <source>
        <dbReference type="PROSITE-ProRule" id="PRU00196"/>
    </source>
</evidence>
<evidence type="ECO:0000256" key="5">
    <source>
        <dbReference type="SAM" id="MobiDB-lite"/>
    </source>
</evidence>
<evidence type="ECO:0000269" key="6">
    <source>
    </source>
</evidence>
<evidence type="ECO:0000305" key="7"/>
<accession>Q9WUB9</accession>
<keyword id="KW-1003">Cell membrane</keyword>
<keyword id="KW-0176">Collagen</keyword>
<keyword id="KW-1015">Disulfide bond</keyword>
<keyword id="KW-0325">Glycoprotein</keyword>
<keyword id="KW-0391">Immunity</keyword>
<keyword id="KW-0399">Innate immunity</keyword>
<keyword id="KW-0472">Membrane</keyword>
<keyword id="KW-0675">Receptor</keyword>
<keyword id="KW-1185">Reference proteome</keyword>
<keyword id="KW-0735">Signal-anchor</keyword>
<keyword id="KW-0812">Transmembrane</keyword>
<keyword id="KW-1133">Transmembrane helix</keyword>
<feature type="chain" id="PRO_0000181631" description="Macrophage receptor MARCO">
    <location>
        <begin position="1"/>
        <end position="483"/>
    </location>
</feature>
<feature type="topological domain" description="Cytoplasmic" evidence="1">
    <location>
        <begin position="1"/>
        <end position="48"/>
    </location>
</feature>
<feature type="transmembrane region" description="Helical; Signal-anchor for type II membrane protein" evidence="3">
    <location>
        <begin position="49"/>
        <end position="69"/>
    </location>
</feature>
<feature type="topological domain" description="Extracellular" evidence="1">
    <location>
        <begin position="70"/>
        <end position="483"/>
    </location>
</feature>
<feature type="domain" description="Collagen-like">
    <location>
        <begin position="148"/>
        <end position="383"/>
    </location>
</feature>
<feature type="domain" description="SRCR" evidence="4">
    <location>
        <begin position="389"/>
        <end position="483"/>
    </location>
</feature>
<feature type="region of interest" description="Disordered" evidence="5">
    <location>
        <begin position="146"/>
        <end position="386"/>
    </location>
</feature>
<feature type="compositionally biased region" description="Low complexity" evidence="5">
    <location>
        <begin position="153"/>
        <end position="166"/>
    </location>
</feature>
<feature type="compositionally biased region" description="Basic and acidic residues" evidence="5">
    <location>
        <begin position="193"/>
        <end position="216"/>
    </location>
</feature>
<feature type="compositionally biased region" description="Low complexity" evidence="5">
    <location>
        <begin position="273"/>
        <end position="286"/>
    </location>
</feature>
<feature type="compositionally biased region" description="Basic and acidic residues" evidence="5">
    <location>
        <begin position="376"/>
        <end position="386"/>
    </location>
</feature>
<feature type="glycosylation site" description="N-linked (GlcNAc...) asparagine" evidence="3">
    <location>
        <position position="85"/>
    </location>
</feature>
<feature type="glycosylation site" description="N-linked (GlcNAc...) asparagine" evidence="3">
    <location>
        <position position="137"/>
    </location>
</feature>
<feature type="disulfide bond" evidence="4">
    <location>
        <begin position="412"/>
        <end position="472"/>
    </location>
</feature>
<feature type="disulfide bond" evidence="4">
    <location>
        <begin position="425"/>
        <end position="482"/>
    </location>
</feature>
<feature type="disulfide bond" evidence="4">
    <location>
        <begin position="452"/>
        <end position="462"/>
    </location>
</feature>
<sequence>MGNKKALKEEAFLGSAEEGADFDQAMFPVMETFEINDPMPKKRNWGSFCTAVMAIHLILLTAGTTLLTLKVLSLQKWILEKYLDNETLAAEDRSFFSLQLASPETHLVPRTPGLQALQVQLTQVRTSQEQLLQQVDNLTRNPELFRIKGERGSPGIPGLQGPPGIKGEAGLQGPMGAPREPGATGAPGPQGEKGSKGDKGLIGPKGEHGTKGDKGDLGLPGSKGDMGMKGVTGVMGPPGAQGNKGDPGKPGLPGLAGSPGVKGDQGQPGLQGVPGTPGAAGPSGAKGEPGHPGPPGPTGPQGISGSPGAAGLKGSKGDTGIQGQKGTKGESGVPGLAGRKGDTGNPGLAGPKGEPGRPGLKGDPGMKGSSGQQGQKGEKGEKGQSFKEVRIVGGTNRGRAEIFYNNAWGTICDDNWDNNDATVFCRMLGYSSGKGFTFGGGSGNIWLDDVNCQGTEDSLWNCRKNNWGSHNCNHNEDAGVECR</sequence>
<protein>
    <recommendedName>
        <fullName>Macrophage receptor MARCO</fullName>
    </recommendedName>
    <alternativeName>
        <fullName>Macrophage receptor with collagenous structure</fullName>
    </alternativeName>
</protein>
<dbReference type="EMBL" id="AF125191">
    <property type="protein sequence ID" value="AAD20360.1"/>
    <property type="molecule type" value="mRNA"/>
</dbReference>
<dbReference type="RefSeq" id="NP_001268535.1">
    <property type="nucleotide sequence ID" value="NM_001281606.1"/>
</dbReference>
<dbReference type="SMR" id="Q9WUB9"/>
<dbReference type="STRING" id="10036.ENSMAUP00000001498"/>
<dbReference type="GlyCosmos" id="Q9WUB9">
    <property type="glycosylation" value="2 sites, No reported glycans"/>
</dbReference>
<dbReference type="GeneID" id="101834359"/>
<dbReference type="KEGG" id="maua:101834359"/>
<dbReference type="CTD" id="8685"/>
<dbReference type="eggNOG" id="ENOG502QWN1">
    <property type="taxonomic scope" value="Eukaryota"/>
</dbReference>
<dbReference type="OrthoDB" id="10037288at2759"/>
<dbReference type="Proteomes" id="UP000189706">
    <property type="component" value="Unplaced"/>
</dbReference>
<dbReference type="GO" id="GO:0005581">
    <property type="term" value="C:collagen trimer"/>
    <property type="evidence" value="ECO:0007669"/>
    <property type="project" value="UniProtKB-KW"/>
</dbReference>
<dbReference type="GO" id="GO:0031012">
    <property type="term" value="C:extracellular matrix"/>
    <property type="evidence" value="ECO:0007669"/>
    <property type="project" value="TreeGrafter"/>
</dbReference>
<dbReference type="GO" id="GO:0005886">
    <property type="term" value="C:plasma membrane"/>
    <property type="evidence" value="ECO:0007669"/>
    <property type="project" value="UniProtKB-SubCell"/>
</dbReference>
<dbReference type="GO" id="GO:0001664">
    <property type="term" value="F:G protein-coupled receptor binding"/>
    <property type="evidence" value="ECO:0007669"/>
    <property type="project" value="TreeGrafter"/>
</dbReference>
<dbReference type="GO" id="GO:0045087">
    <property type="term" value="P:innate immune response"/>
    <property type="evidence" value="ECO:0007669"/>
    <property type="project" value="UniProtKB-KW"/>
</dbReference>
<dbReference type="FunFam" id="3.10.250.10:FF:000011">
    <property type="entry name" value="Scavenger receptor class A member 5"/>
    <property type="match status" value="1"/>
</dbReference>
<dbReference type="Gene3D" id="3.10.250.10">
    <property type="entry name" value="SRCR-like domain"/>
    <property type="match status" value="1"/>
</dbReference>
<dbReference type="InterPro" id="IPR008160">
    <property type="entry name" value="Collagen"/>
</dbReference>
<dbReference type="InterPro" id="IPR050149">
    <property type="entry name" value="Collagen_superfamily"/>
</dbReference>
<dbReference type="InterPro" id="IPR001190">
    <property type="entry name" value="SRCR"/>
</dbReference>
<dbReference type="InterPro" id="IPR036772">
    <property type="entry name" value="SRCR-like_dom_sf"/>
</dbReference>
<dbReference type="PANTHER" id="PTHR24023">
    <property type="entry name" value="COLLAGEN ALPHA"/>
    <property type="match status" value="1"/>
</dbReference>
<dbReference type="PANTHER" id="PTHR24023:SF1083">
    <property type="entry name" value="MACROPHAGE RECEPTOR MARCO"/>
    <property type="match status" value="1"/>
</dbReference>
<dbReference type="Pfam" id="PF01391">
    <property type="entry name" value="Collagen"/>
    <property type="match status" value="2"/>
</dbReference>
<dbReference type="Pfam" id="PF00530">
    <property type="entry name" value="SRCR"/>
    <property type="match status" value="1"/>
</dbReference>
<dbReference type="PRINTS" id="PR00258">
    <property type="entry name" value="SPERACTRCPTR"/>
</dbReference>
<dbReference type="SMART" id="SM00202">
    <property type="entry name" value="SR"/>
    <property type="match status" value="1"/>
</dbReference>
<dbReference type="SUPFAM" id="SSF56487">
    <property type="entry name" value="SRCR-like"/>
    <property type="match status" value="1"/>
</dbReference>
<dbReference type="PROSITE" id="PS00420">
    <property type="entry name" value="SRCR_1"/>
    <property type="match status" value="1"/>
</dbReference>
<dbReference type="PROSITE" id="PS50287">
    <property type="entry name" value="SRCR_2"/>
    <property type="match status" value="1"/>
</dbReference>
<proteinExistence type="evidence at protein level"/>
<name>MARCO_MESAU</name>
<gene>
    <name type="primary">MARCO</name>
</gene>
<reference key="1">
    <citation type="journal article" date="1999" name="J. Exp. Med.">
        <title>Role of the scavenger receptor MARCO in alveolar macrophage binding of unopsonized environmental particles.</title>
        <authorList>
            <person name="Palecanda A."/>
            <person name="Paulauskis J.D."/>
            <person name="Al-Mutairi E."/>
            <person name="Imrich A."/>
            <person name="Qin G."/>
            <person name="Suzuki H."/>
            <person name="Kodama T."/>
            <person name="Tryggvason K."/>
            <person name="Koziel H."/>
            <person name="Kobzik L."/>
        </authorList>
    </citation>
    <scope>NUCLEOTIDE SEQUENCE [MRNA]</scope>
    <scope>FUNCTION</scope>
    <scope>SUBCELLULAR LOCATION</scope>
    <scope>TISSUE SPECIFICITY</scope>
</reference>
<organism>
    <name type="scientific">Mesocricetus auratus</name>
    <name type="common">Golden hamster</name>
    <dbReference type="NCBI Taxonomy" id="10036"/>
    <lineage>
        <taxon>Eukaryota</taxon>
        <taxon>Metazoa</taxon>
        <taxon>Chordata</taxon>
        <taxon>Craniata</taxon>
        <taxon>Vertebrata</taxon>
        <taxon>Euteleostomi</taxon>
        <taxon>Mammalia</taxon>
        <taxon>Eutheria</taxon>
        <taxon>Euarchontoglires</taxon>
        <taxon>Glires</taxon>
        <taxon>Rodentia</taxon>
        <taxon>Myomorpha</taxon>
        <taxon>Muroidea</taxon>
        <taxon>Cricetidae</taxon>
        <taxon>Cricetinae</taxon>
        <taxon>Mesocricetus</taxon>
    </lineage>
</organism>